<comment type="function">
    <text evidence="1">Required for accurate and efficient protein synthesis under certain stress conditions. May act as a fidelity factor of the translation reaction, by catalyzing a one-codon backward translocation of tRNAs on improperly translocated ribosomes. Back-translocation proceeds from a post-translocation (POST) complex to a pre-translocation (PRE) complex, thus giving elongation factor G a second chance to translocate the tRNAs correctly. Binds to ribosomes in a GTP-dependent manner.</text>
</comment>
<comment type="catalytic activity">
    <reaction evidence="1">
        <text>GTP + H2O = GDP + phosphate + H(+)</text>
        <dbReference type="Rhea" id="RHEA:19669"/>
        <dbReference type="ChEBI" id="CHEBI:15377"/>
        <dbReference type="ChEBI" id="CHEBI:15378"/>
        <dbReference type="ChEBI" id="CHEBI:37565"/>
        <dbReference type="ChEBI" id="CHEBI:43474"/>
        <dbReference type="ChEBI" id="CHEBI:58189"/>
        <dbReference type="EC" id="3.6.5.n1"/>
    </reaction>
</comment>
<comment type="subcellular location">
    <subcellularLocation>
        <location evidence="1">Cell inner membrane</location>
        <topology evidence="1">Peripheral membrane protein</topology>
        <orientation evidence="1">Cytoplasmic side</orientation>
    </subcellularLocation>
</comment>
<comment type="similarity">
    <text evidence="1">Belongs to the TRAFAC class translation factor GTPase superfamily. Classic translation factor GTPase family. LepA subfamily.</text>
</comment>
<protein>
    <recommendedName>
        <fullName evidence="1">Elongation factor 4</fullName>
        <shortName evidence="1">EF-4</shortName>
        <ecNumber evidence="1">3.6.5.n1</ecNumber>
    </recommendedName>
    <alternativeName>
        <fullName evidence="1">Ribosomal back-translocase LepA</fullName>
    </alternativeName>
</protein>
<sequence length="597" mass="66068">MKNIRNFSIIAHIDHGKSTLSDRLIQTCGGLSDREMEAQVLDSMDLERERGITIKAQSVTLDYKAKDGETYQLNFIDTPGHVDFSYEVSRSLAACEGALLVVDAGQGVEAQTLANCYTAIEMNLEVVPVLNKIDLPAADPERVAEEIEDIVGIDAMEAVRCSAKTGLGIEEVLEEIVHKIPAPEGDPNAPLQALIIDSWFDNYLGVVSLVRVKNGMLKKGDKIKVMSTGQAYNVDRLGIFTPKQVDRTELTTGEVGWVVCAIKDILGAPVGDTLTHQHNPATAALPGFKKVKPQVYAGLFPVSSDDYEAFRDALGKLSLNDASLFYEPETSSALGFGFRCGFLGLLHMEIIQERLEREYDLDLITTAPTVVYEVELTNGEVVYVDSPSKLPPLNNIGDIREPIAECNMLVPQEYLGNVITLCVEKRGVQTNMVYHGNQIALTYDIPMGEVVLDFFDRLKSTSRGYASLDYSFKRFQSANMVRVDIMINGDRVDALALIVHKDNAVYRGRELVEKMKELIPRQQFDIAIQAAIGNQVIARSTVKQLRKNVLAKCYGGDVSRKKKLLQKQKEGKKRMKQLGNVEVPQEAFLAILHVGKD</sequence>
<accession>A6VLV6</accession>
<organism>
    <name type="scientific">Actinobacillus succinogenes (strain ATCC 55618 / DSM 22257 / CCUG 43843 / 130Z)</name>
    <dbReference type="NCBI Taxonomy" id="339671"/>
    <lineage>
        <taxon>Bacteria</taxon>
        <taxon>Pseudomonadati</taxon>
        <taxon>Pseudomonadota</taxon>
        <taxon>Gammaproteobacteria</taxon>
        <taxon>Pasteurellales</taxon>
        <taxon>Pasteurellaceae</taxon>
        <taxon>Actinobacillus</taxon>
    </lineage>
</organism>
<proteinExistence type="inferred from homology"/>
<name>LEPA_ACTSZ</name>
<feature type="chain" id="PRO_1000071176" description="Elongation factor 4">
    <location>
        <begin position="1"/>
        <end position="597"/>
    </location>
</feature>
<feature type="domain" description="tr-type G">
    <location>
        <begin position="2"/>
        <end position="184"/>
    </location>
</feature>
<feature type="binding site" evidence="1">
    <location>
        <begin position="14"/>
        <end position="19"/>
    </location>
    <ligand>
        <name>GTP</name>
        <dbReference type="ChEBI" id="CHEBI:37565"/>
    </ligand>
</feature>
<feature type="binding site" evidence="1">
    <location>
        <begin position="131"/>
        <end position="134"/>
    </location>
    <ligand>
        <name>GTP</name>
        <dbReference type="ChEBI" id="CHEBI:37565"/>
    </ligand>
</feature>
<keyword id="KW-0997">Cell inner membrane</keyword>
<keyword id="KW-1003">Cell membrane</keyword>
<keyword id="KW-0342">GTP-binding</keyword>
<keyword id="KW-0378">Hydrolase</keyword>
<keyword id="KW-0472">Membrane</keyword>
<keyword id="KW-0547">Nucleotide-binding</keyword>
<keyword id="KW-0648">Protein biosynthesis</keyword>
<keyword id="KW-1185">Reference proteome</keyword>
<evidence type="ECO:0000255" key="1">
    <source>
        <dbReference type="HAMAP-Rule" id="MF_00071"/>
    </source>
</evidence>
<reference key="1">
    <citation type="journal article" date="2010" name="BMC Genomics">
        <title>A genomic perspective on the potential of Actinobacillus succinogenes for industrial succinate production.</title>
        <authorList>
            <person name="McKinlay J.B."/>
            <person name="Laivenieks M."/>
            <person name="Schindler B.D."/>
            <person name="McKinlay A.A."/>
            <person name="Siddaramappa S."/>
            <person name="Challacombe J.F."/>
            <person name="Lowry S.R."/>
            <person name="Clum A."/>
            <person name="Lapidus A.L."/>
            <person name="Burkhart K.B."/>
            <person name="Harkins V."/>
            <person name="Vieille C."/>
        </authorList>
    </citation>
    <scope>NUCLEOTIDE SEQUENCE [LARGE SCALE GENOMIC DNA]</scope>
    <source>
        <strain>ATCC 55618 / DSM 22257 / CCUG 43843 / 130Z</strain>
    </source>
</reference>
<dbReference type="EC" id="3.6.5.n1" evidence="1"/>
<dbReference type="EMBL" id="CP000746">
    <property type="protein sequence ID" value="ABR73953.1"/>
    <property type="molecule type" value="Genomic_DNA"/>
</dbReference>
<dbReference type="RefSeq" id="WP_012072333.1">
    <property type="nucleotide sequence ID" value="NC_009655.1"/>
</dbReference>
<dbReference type="SMR" id="A6VLV6"/>
<dbReference type="STRING" id="339671.Asuc_0578"/>
<dbReference type="KEGG" id="asu:Asuc_0578"/>
<dbReference type="eggNOG" id="COG0481">
    <property type="taxonomic scope" value="Bacteria"/>
</dbReference>
<dbReference type="HOGENOM" id="CLU_009995_3_3_6"/>
<dbReference type="OrthoDB" id="9804431at2"/>
<dbReference type="Proteomes" id="UP000001114">
    <property type="component" value="Chromosome"/>
</dbReference>
<dbReference type="GO" id="GO:0005886">
    <property type="term" value="C:plasma membrane"/>
    <property type="evidence" value="ECO:0007669"/>
    <property type="project" value="UniProtKB-SubCell"/>
</dbReference>
<dbReference type="GO" id="GO:0005525">
    <property type="term" value="F:GTP binding"/>
    <property type="evidence" value="ECO:0007669"/>
    <property type="project" value="UniProtKB-UniRule"/>
</dbReference>
<dbReference type="GO" id="GO:0003924">
    <property type="term" value="F:GTPase activity"/>
    <property type="evidence" value="ECO:0007669"/>
    <property type="project" value="UniProtKB-UniRule"/>
</dbReference>
<dbReference type="GO" id="GO:0097216">
    <property type="term" value="F:guanosine tetraphosphate binding"/>
    <property type="evidence" value="ECO:0007669"/>
    <property type="project" value="UniProtKB-ARBA"/>
</dbReference>
<dbReference type="GO" id="GO:0043022">
    <property type="term" value="F:ribosome binding"/>
    <property type="evidence" value="ECO:0007669"/>
    <property type="project" value="UniProtKB-UniRule"/>
</dbReference>
<dbReference type="GO" id="GO:0003746">
    <property type="term" value="F:translation elongation factor activity"/>
    <property type="evidence" value="ECO:0007669"/>
    <property type="project" value="UniProtKB-UniRule"/>
</dbReference>
<dbReference type="GO" id="GO:0045727">
    <property type="term" value="P:positive regulation of translation"/>
    <property type="evidence" value="ECO:0007669"/>
    <property type="project" value="UniProtKB-UniRule"/>
</dbReference>
<dbReference type="CDD" id="cd03699">
    <property type="entry name" value="EF4_II"/>
    <property type="match status" value="1"/>
</dbReference>
<dbReference type="CDD" id="cd16260">
    <property type="entry name" value="EF4_III"/>
    <property type="match status" value="1"/>
</dbReference>
<dbReference type="CDD" id="cd01890">
    <property type="entry name" value="LepA"/>
    <property type="match status" value="1"/>
</dbReference>
<dbReference type="CDD" id="cd03709">
    <property type="entry name" value="lepA_C"/>
    <property type="match status" value="1"/>
</dbReference>
<dbReference type="FunFam" id="3.30.70.240:FF:000005">
    <property type="entry name" value="Elongation factor 4"/>
    <property type="match status" value="1"/>
</dbReference>
<dbReference type="FunFam" id="3.40.50.300:FF:000078">
    <property type="entry name" value="Elongation factor 4"/>
    <property type="match status" value="1"/>
</dbReference>
<dbReference type="FunFam" id="2.40.30.10:FF:000015">
    <property type="entry name" value="Translation factor GUF1, mitochondrial"/>
    <property type="match status" value="1"/>
</dbReference>
<dbReference type="FunFam" id="3.30.70.2570:FF:000001">
    <property type="entry name" value="Translation factor GUF1, mitochondrial"/>
    <property type="match status" value="1"/>
</dbReference>
<dbReference type="FunFam" id="3.30.70.870:FF:000004">
    <property type="entry name" value="Translation factor GUF1, mitochondrial"/>
    <property type="match status" value="1"/>
</dbReference>
<dbReference type="Gene3D" id="3.30.70.240">
    <property type="match status" value="1"/>
</dbReference>
<dbReference type="Gene3D" id="3.30.70.2570">
    <property type="entry name" value="Elongation factor 4, C-terminal domain"/>
    <property type="match status" value="1"/>
</dbReference>
<dbReference type="Gene3D" id="3.30.70.870">
    <property type="entry name" value="Elongation Factor G (Translational Gtpase), domain 3"/>
    <property type="match status" value="1"/>
</dbReference>
<dbReference type="Gene3D" id="3.40.50.300">
    <property type="entry name" value="P-loop containing nucleotide triphosphate hydrolases"/>
    <property type="match status" value="1"/>
</dbReference>
<dbReference type="Gene3D" id="2.40.30.10">
    <property type="entry name" value="Translation factors"/>
    <property type="match status" value="1"/>
</dbReference>
<dbReference type="HAMAP" id="MF_00071">
    <property type="entry name" value="LepA"/>
    <property type="match status" value="1"/>
</dbReference>
<dbReference type="InterPro" id="IPR006297">
    <property type="entry name" value="EF-4"/>
</dbReference>
<dbReference type="InterPro" id="IPR035647">
    <property type="entry name" value="EFG_III/V"/>
</dbReference>
<dbReference type="InterPro" id="IPR000640">
    <property type="entry name" value="EFG_V-like"/>
</dbReference>
<dbReference type="InterPro" id="IPR004161">
    <property type="entry name" value="EFTu-like_2"/>
</dbReference>
<dbReference type="InterPro" id="IPR031157">
    <property type="entry name" value="G_TR_CS"/>
</dbReference>
<dbReference type="InterPro" id="IPR038363">
    <property type="entry name" value="LepA_C_sf"/>
</dbReference>
<dbReference type="InterPro" id="IPR013842">
    <property type="entry name" value="LepA_CTD"/>
</dbReference>
<dbReference type="InterPro" id="IPR035654">
    <property type="entry name" value="LepA_IV"/>
</dbReference>
<dbReference type="InterPro" id="IPR027417">
    <property type="entry name" value="P-loop_NTPase"/>
</dbReference>
<dbReference type="InterPro" id="IPR005225">
    <property type="entry name" value="Small_GTP-bd"/>
</dbReference>
<dbReference type="InterPro" id="IPR000795">
    <property type="entry name" value="T_Tr_GTP-bd_dom"/>
</dbReference>
<dbReference type="NCBIfam" id="TIGR01393">
    <property type="entry name" value="lepA"/>
    <property type="match status" value="1"/>
</dbReference>
<dbReference type="NCBIfam" id="TIGR00231">
    <property type="entry name" value="small_GTP"/>
    <property type="match status" value="1"/>
</dbReference>
<dbReference type="PANTHER" id="PTHR43512:SF4">
    <property type="entry name" value="TRANSLATION FACTOR GUF1 HOMOLOG, CHLOROPLASTIC"/>
    <property type="match status" value="1"/>
</dbReference>
<dbReference type="PANTHER" id="PTHR43512">
    <property type="entry name" value="TRANSLATION FACTOR GUF1-RELATED"/>
    <property type="match status" value="1"/>
</dbReference>
<dbReference type="Pfam" id="PF00679">
    <property type="entry name" value="EFG_C"/>
    <property type="match status" value="1"/>
</dbReference>
<dbReference type="Pfam" id="PF00009">
    <property type="entry name" value="GTP_EFTU"/>
    <property type="match status" value="1"/>
</dbReference>
<dbReference type="Pfam" id="PF03144">
    <property type="entry name" value="GTP_EFTU_D2"/>
    <property type="match status" value="1"/>
</dbReference>
<dbReference type="Pfam" id="PF06421">
    <property type="entry name" value="LepA_C"/>
    <property type="match status" value="1"/>
</dbReference>
<dbReference type="PRINTS" id="PR00315">
    <property type="entry name" value="ELONGATNFCT"/>
</dbReference>
<dbReference type="SUPFAM" id="SSF54980">
    <property type="entry name" value="EF-G C-terminal domain-like"/>
    <property type="match status" value="2"/>
</dbReference>
<dbReference type="SUPFAM" id="SSF52540">
    <property type="entry name" value="P-loop containing nucleoside triphosphate hydrolases"/>
    <property type="match status" value="1"/>
</dbReference>
<dbReference type="PROSITE" id="PS00301">
    <property type="entry name" value="G_TR_1"/>
    <property type="match status" value="1"/>
</dbReference>
<dbReference type="PROSITE" id="PS51722">
    <property type="entry name" value="G_TR_2"/>
    <property type="match status" value="1"/>
</dbReference>
<gene>
    <name evidence="1" type="primary">lepA</name>
    <name type="ordered locus">Asuc_0578</name>
</gene>